<feature type="chain" id="PRO_1000135123" description="1-(5-phosphoribosyl)-5-[(5-phosphoribosylamino)methylideneamino] imidazole-4-carboxamide isomerase">
    <location>
        <begin position="1"/>
        <end position="245"/>
    </location>
</feature>
<feature type="active site" description="Proton acceptor" evidence="1">
    <location>
        <position position="8"/>
    </location>
</feature>
<feature type="active site" description="Proton donor" evidence="1">
    <location>
        <position position="129"/>
    </location>
</feature>
<accession>B0TDM8</accession>
<name>HIS4_HELMI</name>
<sequence>MLIFPAIDLKGGRCVRLYQGRMEDAIVYNDDPVSQALAWQAKGAQMIHLVDLDGAFEGEPKNLPVIQAILEAVTVAVQLGGGIRDLNIIDRYLRMGVSRVIIGTAAIKNPELLSVACKEYGQRIVLGLDARDGKVATDGWAGTSQVTALELALEMKGRGLRRVVYTDISKDGTLAGPNLAATAELARATGLKVIASGGFATIDDVKAAAALEGDGIEGAILGKSIYTGAIDVAEAIRVAREGRPC</sequence>
<comment type="catalytic activity">
    <reaction evidence="1">
        <text>1-(5-phospho-beta-D-ribosyl)-5-[(5-phospho-beta-D-ribosylamino)methylideneamino]imidazole-4-carboxamide = 5-[(5-phospho-1-deoxy-D-ribulos-1-ylimino)methylamino]-1-(5-phospho-beta-D-ribosyl)imidazole-4-carboxamide</text>
        <dbReference type="Rhea" id="RHEA:15469"/>
        <dbReference type="ChEBI" id="CHEBI:58435"/>
        <dbReference type="ChEBI" id="CHEBI:58525"/>
        <dbReference type="EC" id="5.3.1.16"/>
    </reaction>
</comment>
<comment type="pathway">
    <text evidence="1">Amino-acid biosynthesis; L-histidine biosynthesis; L-histidine from 5-phospho-alpha-D-ribose 1-diphosphate: step 4/9.</text>
</comment>
<comment type="subcellular location">
    <subcellularLocation>
        <location evidence="1">Cytoplasm</location>
    </subcellularLocation>
</comment>
<comment type="similarity">
    <text evidence="1">Belongs to the HisA/HisF family.</text>
</comment>
<protein>
    <recommendedName>
        <fullName evidence="1">1-(5-phosphoribosyl)-5-[(5-phosphoribosylamino)methylideneamino] imidazole-4-carboxamide isomerase</fullName>
        <ecNumber evidence="1">5.3.1.16</ecNumber>
    </recommendedName>
    <alternativeName>
        <fullName evidence="1">Phosphoribosylformimino-5-aminoimidazole carboxamide ribotide isomerase</fullName>
    </alternativeName>
</protein>
<dbReference type="EC" id="5.3.1.16" evidence="1"/>
<dbReference type="EMBL" id="CP000930">
    <property type="protein sequence ID" value="ABZ85553.1"/>
    <property type="molecule type" value="Genomic_DNA"/>
</dbReference>
<dbReference type="RefSeq" id="WP_012284028.1">
    <property type="nucleotide sequence ID" value="NC_010337.2"/>
</dbReference>
<dbReference type="SMR" id="B0TDM8"/>
<dbReference type="STRING" id="498761.HM1_3046"/>
<dbReference type="KEGG" id="hmo:HM1_3046"/>
<dbReference type="eggNOG" id="COG0106">
    <property type="taxonomic scope" value="Bacteria"/>
</dbReference>
<dbReference type="HOGENOM" id="CLU_048577_1_1_9"/>
<dbReference type="OrthoDB" id="9807749at2"/>
<dbReference type="UniPathway" id="UPA00031">
    <property type="reaction ID" value="UER00009"/>
</dbReference>
<dbReference type="Proteomes" id="UP000008550">
    <property type="component" value="Chromosome"/>
</dbReference>
<dbReference type="GO" id="GO:0005737">
    <property type="term" value="C:cytoplasm"/>
    <property type="evidence" value="ECO:0007669"/>
    <property type="project" value="UniProtKB-SubCell"/>
</dbReference>
<dbReference type="GO" id="GO:0003949">
    <property type="term" value="F:1-(5-phosphoribosyl)-5-[(5-phosphoribosylamino)methylideneamino]imidazole-4-carboxamide isomerase activity"/>
    <property type="evidence" value="ECO:0007669"/>
    <property type="project" value="UniProtKB-UniRule"/>
</dbReference>
<dbReference type="GO" id="GO:0000105">
    <property type="term" value="P:L-histidine biosynthetic process"/>
    <property type="evidence" value="ECO:0007669"/>
    <property type="project" value="UniProtKB-UniRule"/>
</dbReference>
<dbReference type="GO" id="GO:0000162">
    <property type="term" value="P:L-tryptophan biosynthetic process"/>
    <property type="evidence" value="ECO:0007669"/>
    <property type="project" value="TreeGrafter"/>
</dbReference>
<dbReference type="CDD" id="cd04732">
    <property type="entry name" value="HisA"/>
    <property type="match status" value="1"/>
</dbReference>
<dbReference type="FunFam" id="3.20.20.70:FF:000009">
    <property type="entry name" value="1-(5-phosphoribosyl)-5-[(5-phosphoribosylamino)methylideneamino] imidazole-4-carboxamide isomerase"/>
    <property type="match status" value="1"/>
</dbReference>
<dbReference type="Gene3D" id="3.20.20.70">
    <property type="entry name" value="Aldolase class I"/>
    <property type="match status" value="1"/>
</dbReference>
<dbReference type="HAMAP" id="MF_01014">
    <property type="entry name" value="HisA"/>
    <property type="match status" value="1"/>
</dbReference>
<dbReference type="InterPro" id="IPR013785">
    <property type="entry name" value="Aldolase_TIM"/>
</dbReference>
<dbReference type="InterPro" id="IPR006062">
    <property type="entry name" value="His_biosynth"/>
</dbReference>
<dbReference type="InterPro" id="IPR006063">
    <property type="entry name" value="HisA_bact_arch"/>
</dbReference>
<dbReference type="InterPro" id="IPR044524">
    <property type="entry name" value="Isoase_HisA-like"/>
</dbReference>
<dbReference type="InterPro" id="IPR023016">
    <property type="entry name" value="Isoase_HisA-like_bact"/>
</dbReference>
<dbReference type="InterPro" id="IPR011060">
    <property type="entry name" value="RibuloseP-bd_barrel"/>
</dbReference>
<dbReference type="NCBIfam" id="TIGR00007">
    <property type="entry name" value="1-(5-phosphoribosyl)-5-[(5-phosphoribosylamino)methylideneamino]imidazole-4-carboxamide isomerase"/>
    <property type="match status" value="1"/>
</dbReference>
<dbReference type="PANTHER" id="PTHR43090">
    <property type="entry name" value="1-(5-PHOSPHORIBOSYL)-5-[(5-PHOSPHORIBOSYLAMINO)METHYLIDENEAMINO] IMIDAZOLE-4-CARBOXAMIDE ISOMERASE"/>
    <property type="match status" value="1"/>
</dbReference>
<dbReference type="PANTHER" id="PTHR43090:SF2">
    <property type="entry name" value="1-(5-PHOSPHORIBOSYL)-5-[(5-PHOSPHORIBOSYLAMINO)METHYLIDENEAMINO] IMIDAZOLE-4-CARBOXAMIDE ISOMERASE"/>
    <property type="match status" value="1"/>
</dbReference>
<dbReference type="Pfam" id="PF00977">
    <property type="entry name" value="His_biosynth"/>
    <property type="match status" value="1"/>
</dbReference>
<dbReference type="SUPFAM" id="SSF51366">
    <property type="entry name" value="Ribulose-phoshate binding barrel"/>
    <property type="match status" value="1"/>
</dbReference>
<gene>
    <name evidence="1" type="primary">hisA</name>
    <name type="ordered locus">Helmi_29280</name>
    <name type="ORF">HM1_3046</name>
</gene>
<reference key="1">
    <citation type="journal article" date="2008" name="J. Bacteriol.">
        <title>The genome of Heliobacterium modesticaldum, a phototrophic representative of the Firmicutes containing the simplest photosynthetic apparatus.</title>
        <authorList>
            <person name="Sattley W.M."/>
            <person name="Madigan M.T."/>
            <person name="Swingley W.D."/>
            <person name="Cheung P.C."/>
            <person name="Clocksin K.M."/>
            <person name="Conrad A.L."/>
            <person name="Dejesa L.C."/>
            <person name="Honchak B.M."/>
            <person name="Jung D.O."/>
            <person name="Karbach L.E."/>
            <person name="Kurdoglu A."/>
            <person name="Lahiri S."/>
            <person name="Mastrian S.D."/>
            <person name="Page L.E."/>
            <person name="Taylor H.L."/>
            <person name="Wang Z.T."/>
            <person name="Raymond J."/>
            <person name="Chen M."/>
            <person name="Blankenship R.E."/>
            <person name="Touchman J.W."/>
        </authorList>
    </citation>
    <scope>NUCLEOTIDE SEQUENCE [LARGE SCALE GENOMIC DNA]</scope>
    <source>
        <strain>ATCC 51547 / Ice1</strain>
    </source>
</reference>
<proteinExistence type="inferred from homology"/>
<organism>
    <name type="scientific">Heliobacterium modesticaldum (strain ATCC 51547 / Ice1)</name>
    <dbReference type="NCBI Taxonomy" id="498761"/>
    <lineage>
        <taxon>Bacteria</taxon>
        <taxon>Bacillati</taxon>
        <taxon>Bacillota</taxon>
        <taxon>Clostridia</taxon>
        <taxon>Eubacteriales</taxon>
        <taxon>Heliobacteriaceae</taxon>
        <taxon>Heliomicrobium</taxon>
    </lineage>
</organism>
<keyword id="KW-0028">Amino-acid biosynthesis</keyword>
<keyword id="KW-0963">Cytoplasm</keyword>
<keyword id="KW-0368">Histidine biosynthesis</keyword>
<keyword id="KW-0413">Isomerase</keyword>
<keyword id="KW-1185">Reference proteome</keyword>
<evidence type="ECO:0000255" key="1">
    <source>
        <dbReference type="HAMAP-Rule" id="MF_01014"/>
    </source>
</evidence>